<name>SCNNB_NEOFS</name>
<feature type="chain" id="PRO_0000433087" description="Epithelial sodium channel subunit beta">
    <location>
        <begin position="1"/>
        <end position="651"/>
    </location>
</feature>
<feature type="topological domain" description="Cytoplasmic" evidence="1">
    <location>
        <begin position="1"/>
        <end position="50"/>
    </location>
</feature>
<feature type="transmembrane region" description="Helical; Name=1" evidence="4">
    <location>
        <begin position="51"/>
        <end position="71"/>
    </location>
</feature>
<feature type="topological domain" description="Extracellular" evidence="1">
    <location>
        <begin position="72"/>
        <end position="541"/>
    </location>
</feature>
<feature type="transmembrane region" description="Helical; Name=2" evidence="4">
    <location>
        <begin position="542"/>
        <end position="562"/>
    </location>
</feature>
<feature type="topological domain" description="Cytoplasmic" evidence="1">
    <location>
        <begin position="563"/>
        <end position="651"/>
    </location>
</feature>
<feature type="region of interest" description="Disordered" evidence="5">
    <location>
        <begin position="612"/>
        <end position="651"/>
    </location>
</feature>
<feature type="compositionally biased region" description="Basic and acidic residues" evidence="5">
    <location>
        <begin position="633"/>
        <end position="651"/>
    </location>
</feature>
<feature type="disulfide bond" evidence="3">
    <location>
        <begin position="98"/>
        <end position="281"/>
    </location>
</feature>
<feature type="disulfide bond" evidence="3">
    <location>
        <begin position="205"/>
        <end position="212"/>
    </location>
</feature>
<feature type="disulfide bond" evidence="3">
    <location>
        <begin position="258"/>
        <end position="265"/>
    </location>
</feature>
<feature type="disulfide bond" evidence="3">
    <location>
        <begin position="370"/>
        <end position="457"/>
    </location>
</feature>
<feature type="disulfide bond" evidence="3">
    <location>
        <begin position="395"/>
        <end position="453"/>
    </location>
</feature>
<feature type="disulfide bond" evidence="3">
    <location>
        <begin position="399"/>
        <end position="449"/>
    </location>
</feature>
<feature type="disulfide bond" evidence="3">
    <location>
        <begin position="408"/>
        <end position="435"/>
    </location>
</feature>
<feature type="disulfide bond" evidence="3">
    <location>
        <begin position="410"/>
        <end position="424"/>
    </location>
</feature>
<accession>H1AFJ6</accession>
<sequence length="651" mass="74207">MFLKRWFIRALHRLQKGPGYGYSELFVWYCNNTNTHGPKRLIIEGPKKKTLWSLFTVTFACLVFWQWGLLIQTYLSWGVSVSLSVGFRGMDFPAVTVCNVNPFKYSKVKPLLKELDELVDILLEQFYSYSTNGTLPVVFPDMRSSYLTGDPPPWYQIPLVMIDETDADNPTVTNVLGTDALSPTNNSTTNSSTEARRYKVAFHLCNTNGTDCFYKNFSSSLEAVKEWYTLQYIDIISKLPLSQKVEMGYSGKDFILTCLFGGEACNYDNFTQFYHSSYGNCYVFNWGLDGNVLIVSNPGVGFGLQLALDVNQEEYIPFLTTRAGARFLLHTQNTFPFVETMGTYALVGTVTSVGILVDEVQRMGQPYGTCTTDGLDVPIDNLYSQYNLSYTMQSCLWSCFQIQMVNSCGCAYYLYPLPEGATYCNNQNNSDWAYCYYLLQDSKDHKNECLQTCIQTCNELQFRISTSMADWPSESSEDWIFHVLSYERDDSTNITMKRDGVLKLNLYFKEFNYRVITESVATNVVWLLSNLGGQFGFWMGGSVLCIIEFGEVFIDCIWIAVIRFVKWYKNRKERQVQAQYADPPPTVSELVEGYTNQGFQPDIINSCSPQAQPPDLYLPTTLEIPGTPPPKYDSLRVHPIDTEHHSDSEDL</sequence>
<keyword id="KW-1003">Cell membrane</keyword>
<keyword id="KW-0968">Cytoplasmic vesicle</keyword>
<keyword id="KW-1015">Disulfide bond</keyword>
<keyword id="KW-0407">Ion channel</keyword>
<keyword id="KW-0406">Ion transport</keyword>
<keyword id="KW-0472">Membrane</keyword>
<keyword id="KW-0915">Sodium</keyword>
<keyword id="KW-0894">Sodium channel</keyword>
<keyword id="KW-0739">Sodium transport</keyword>
<keyword id="KW-0812">Transmembrane</keyword>
<keyword id="KW-1133">Transmembrane helix</keyword>
<keyword id="KW-0813">Transport</keyword>
<dbReference type="EMBL" id="AB675923">
    <property type="protein sequence ID" value="BAL46407.1"/>
    <property type="molecule type" value="mRNA"/>
</dbReference>
<dbReference type="SMR" id="H1AFJ6"/>
<dbReference type="GO" id="GO:0016324">
    <property type="term" value="C:apical plasma membrane"/>
    <property type="evidence" value="ECO:0000250"/>
    <property type="project" value="UniProtKB"/>
</dbReference>
<dbReference type="GO" id="GO:0030659">
    <property type="term" value="C:cytoplasmic vesicle membrane"/>
    <property type="evidence" value="ECO:0007669"/>
    <property type="project" value="UniProtKB-SubCell"/>
</dbReference>
<dbReference type="GO" id="GO:0034706">
    <property type="term" value="C:sodium channel complex"/>
    <property type="evidence" value="ECO:0000305"/>
    <property type="project" value="UniProtKB"/>
</dbReference>
<dbReference type="GO" id="GO:0015280">
    <property type="term" value="F:ligand-gated sodium channel activity"/>
    <property type="evidence" value="ECO:0007669"/>
    <property type="project" value="InterPro"/>
</dbReference>
<dbReference type="GO" id="GO:0035725">
    <property type="term" value="P:sodium ion transmembrane transport"/>
    <property type="evidence" value="ECO:0000314"/>
    <property type="project" value="UniProtKB"/>
</dbReference>
<dbReference type="FunFam" id="1.10.287.770:FF:000002">
    <property type="entry name" value="Amiloride-sensitive sodium channel subunit beta 1"/>
    <property type="match status" value="1"/>
</dbReference>
<dbReference type="Gene3D" id="2.60.470.10">
    <property type="entry name" value="Acid-sensing ion channels like domains"/>
    <property type="match status" value="1"/>
</dbReference>
<dbReference type="Gene3D" id="1.10.287.770">
    <property type="entry name" value="YojJ-like"/>
    <property type="match status" value="1"/>
</dbReference>
<dbReference type="InterPro" id="IPR001873">
    <property type="entry name" value="ENaC"/>
</dbReference>
<dbReference type="InterPro" id="IPR004724">
    <property type="entry name" value="ENaC_chordates"/>
</dbReference>
<dbReference type="InterPro" id="IPR020903">
    <property type="entry name" value="ENaC_CS"/>
</dbReference>
<dbReference type="NCBIfam" id="TIGR00859">
    <property type="entry name" value="ENaC"/>
    <property type="match status" value="1"/>
</dbReference>
<dbReference type="PANTHER" id="PTHR11690:SF18">
    <property type="entry name" value="AMILORIDE-SENSITIVE SODIUM CHANNEL SUBUNIT BETA"/>
    <property type="match status" value="1"/>
</dbReference>
<dbReference type="PANTHER" id="PTHR11690">
    <property type="entry name" value="AMILORIDE-SENSITIVE SODIUM CHANNEL-RELATED"/>
    <property type="match status" value="1"/>
</dbReference>
<dbReference type="Pfam" id="PF00858">
    <property type="entry name" value="ASC"/>
    <property type="match status" value="1"/>
</dbReference>
<dbReference type="PRINTS" id="PR01078">
    <property type="entry name" value="AMINACHANNEL"/>
</dbReference>
<dbReference type="PROSITE" id="PS01206">
    <property type="entry name" value="ASC"/>
    <property type="match status" value="1"/>
</dbReference>
<organism>
    <name type="scientific">Neoceratodus forsteri</name>
    <name type="common">Australian lungfish</name>
    <name type="synonym">Ceratodus forsteri</name>
    <dbReference type="NCBI Taxonomy" id="7892"/>
    <lineage>
        <taxon>Eukaryota</taxon>
        <taxon>Metazoa</taxon>
        <taxon>Chordata</taxon>
        <taxon>Craniata</taxon>
        <taxon>Vertebrata</taxon>
        <taxon>Euteleostomi</taxon>
        <taxon>Dipnomorpha</taxon>
        <taxon>Ceratodontiformes</taxon>
        <taxon>Ceratodontoidei</taxon>
        <taxon>Ceratodontidae</taxon>
        <taxon>Neoceratodus</taxon>
    </lineage>
</organism>
<gene>
    <name evidence="3" type="primary">scnn1b</name>
    <name evidence="8" type="synonym">enacbeta</name>
</gene>
<comment type="function">
    <text evidence="6">This is one of the three pore-forming subunits of the heterotrimeric epithelial sodium channel (ENaC), a critical regulator of sodium balance and fluid homeostasis (PubMed:23055064). ENaC operates in epithelial tissues, where it mediates the electrodiffusion of sodium ions from extracellular fluid through the apical membrane of cells, with water following osmotically (PubMed:23055064).</text>
</comment>
<comment type="catalytic activity">
    <reaction evidence="6">
        <text>Na(+)(in) = Na(+)(out)</text>
        <dbReference type="Rhea" id="RHEA:34963"/>
        <dbReference type="ChEBI" id="CHEBI:29101"/>
    </reaction>
</comment>
<comment type="activity regulation">
    <text evidence="6">Originally identified and characterized by its inhibition by the diuretic drug amiloride.</text>
</comment>
<comment type="subunit">
    <text evidence="3">Component of the heterotrimeric epithelial sodium channel (ENaC) composed of an alpha/SCNN1A, a beta/SCNN1B and a gamma/SCNN1G subunit.</text>
</comment>
<comment type="subcellular location">
    <subcellularLocation>
        <location evidence="3">Apical cell membrane</location>
        <topology evidence="3">Multi-pass membrane protein</topology>
    </subcellularLocation>
    <subcellularLocation>
        <location evidence="2">Cytoplasmic vesicle membrane</location>
        <topology evidence="3">Multi-pass membrane protein</topology>
    </subcellularLocation>
</comment>
<comment type="tissue specificity">
    <text evidence="6">Strongly expressed in gill, kidney and rectum and more weakly in brain, eye, liver and muscle.</text>
</comment>
<comment type="similarity">
    <text evidence="7">Belongs to the amiloride-sensitive sodium channel (TC 1.A.6) family. SCNN1B subfamily.</text>
</comment>
<reference key="1">
    <citation type="journal article" date="2012" name="Proc. R. Soc. B">
        <title>The epithelial sodium channel in the Australian lungfish, Neoceratodus forsteri (Osteichthyes: Dipnoi).</title>
        <authorList>
            <person name="Uchiyama M."/>
            <person name="Maejima S."/>
            <person name="Yoshie S."/>
            <person name="Kubo Y."/>
            <person name="Konno N."/>
            <person name="Joss J.M.P."/>
        </authorList>
    </citation>
    <scope>NUCLEOTIDE SEQUENCE [MRNA]</scope>
    <scope>FUNCTION</scope>
    <scope>TRANSPORTER ACTIVITY</scope>
    <scope>ACTIVITY REGULATION</scope>
    <scope>TISSUE SPECIFICITY</scope>
    <source>
        <tissue>Gill</tissue>
    </source>
</reference>
<evidence type="ECO:0000250" key="1">
    <source>
        <dbReference type="UniProtKB" id="P37089"/>
    </source>
</evidence>
<evidence type="ECO:0000250" key="2">
    <source>
        <dbReference type="UniProtKB" id="P37090"/>
    </source>
</evidence>
<evidence type="ECO:0000250" key="3">
    <source>
        <dbReference type="UniProtKB" id="P51168"/>
    </source>
</evidence>
<evidence type="ECO:0000255" key="4"/>
<evidence type="ECO:0000256" key="5">
    <source>
        <dbReference type="SAM" id="MobiDB-lite"/>
    </source>
</evidence>
<evidence type="ECO:0000269" key="6">
    <source>
    </source>
</evidence>
<evidence type="ECO:0000305" key="7"/>
<evidence type="ECO:0000312" key="8">
    <source>
        <dbReference type="EMBL" id="BAL46407.1"/>
    </source>
</evidence>
<protein>
    <recommendedName>
        <fullName evidence="3">Epithelial sodium channel subunit beta</fullName>
    </recommendedName>
    <alternativeName>
        <fullName>Amiloride-sensitive sodium channel subunit beta</fullName>
    </alternativeName>
    <alternativeName>
        <fullName>Beta-NaCH</fullName>
    </alternativeName>
    <alternativeName>
        <fullName>Epithelial Na(+) channel subunit beta</fullName>
        <shortName>Beta-ENaC</shortName>
    </alternativeName>
    <alternativeName>
        <fullName>Nonvoltage-gated sodium channel 1 subunit beta</fullName>
    </alternativeName>
    <alternativeName>
        <fullName>SCNEB</fullName>
    </alternativeName>
</protein>
<proteinExistence type="evidence at transcript level"/>